<protein>
    <recommendedName>
        <fullName>Glyceraldehyde-3-phosphate dehydrogenase, cytosolic</fullName>
        <ecNumber>1.2.1.12</ecNumber>
    </recommendedName>
</protein>
<reference key="1">
    <citation type="journal article" date="1990" name="J. Biol. Chem.">
        <title>Increased expression of a gene coding for NAD:glyceraldehyde-3-phosphate dehydrogenase during the transition from C3 photosynthesis to crassulacean acid metabolism in Mesembryanthemum crystallinum.</title>
        <authorList>
            <person name="Ostrem J.A."/>
            <person name="Vernon D.M."/>
            <person name="Bohnert H.J."/>
        </authorList>
    </citation>
    <scope>NUCLEOTIDE SEQUENCE [MRNA]</scope>
</reference>
<dbReference type="EC" id="1.2.1.12"/>
<dbReference type="EMBL" id="J05223">
    <property type="protein sequence ID" value="AAA33033.1"/>
    <property type="molecule type" value="mRNA"/>
</dbReference>
<dbReference type="EMBL" id="M29956">
    <property type="protein sequence ID" value="AAA33031.1"/>
    <property type="molecule type" value="mRNA"/>
</dbReference>
<dbReference type="PIR" id="A35080">
    <property type="entry name" value="A35080"/>
</dbReference>
<dbReference type="SMR" id="P17878"/>
<dbReference type="UniPathway" id="UPA00109">
    <property type="reaction ID" value="UER00184"/>
</dbReference>
<dbReference type="GO" id="GO:0005829">
    <property type="term" value="C:cytosol"/>
    <property type="evidence" value="ECO:0007669"/>
    <property type="project" value="TreeGrafter"/>
</dbReference>
<dbReference type="GO" id="GO:0004365">
    <property type="term" value="F:glyceraldehyde-3-phosphate dehydrogenase (NAD+) (phosphorylating) activity"/>
    <property type="evidence" value="ECO:0007669"/>
    <property type="project" value="UniProtKB-EC"/>
</dbReference>
<dbReference type="GO" id="GO:0051287">
    <property type="term" value="F:NAD binding"/>
    <property type="evidence" value="ECO:0007669"/>
    <property type="project" value="InterPro"/>
</dbReference>
<dbReference type="GO" id="GO:0050661">
    <property type="term" value="F:NADP binding"/>
    <property type="evidence" value="ECO:0007669"/>
    <property type="project" value="InterPro"/>
</dbReference>
<dbReference type="GO" id="GO:0006006">
    <property type="term" value="P:glucose metabolic process"/>
    <property type="evidence" value="ECO:0007669"/>
    <property type="project" value="InterPro"/>
</dbReference>
<dbReference type="GO" id="GO:0006096">
    <property type="term" value="P:glycolytic process"/>
    <property type="evidence" value="ECO:0007669"/>
    <property type="project" value="UniProtKB-UniPathway"/>
</dbReference>
<dbReference type="CDD" id="cd18126">
    <property type="entry name" value="GAPDH_I_C"/>
    <property type="match status" value="1"/>
</dbReference>
<dbReference type="CDD" id="cd05214">
    <property type="entry name" value="GAPDH_I_N"/>
    <property type="match status" value="1"/>
</dbReference>
<dbReference type="FunFam" id="3.30.360.10:FF:000001">
    <property type="entry name" value="Glyceraldehyde-3-phosphate dehydrogenase"/>
    <property type="match status" value="1"/>
</dbReference>
<dbReference type="FunFam" id="3.40.50.720:FF:000020">
    <property type="entry name" value="Glyceraldehyde-3-phosphate dehydrogenase"/>
    <property type="match status" value="1"/>
</dbReference>
<dbReference type="Gene3D" id="3.30.360.10">
    <property type="entry name" value="Dihydrodipicolinate Reductase, domain 2"/>
    <property type="match status" value="1"/>
</dbReference>
<dbReference type="Gene3D" id="3.40.50.720">
    <property type="entry name" value="NAD(P)-binding Rossmann-like Domain"/>
    <property type="match status" value="1"/>
</dbReference>
<dbReference type="InterPro" id="IPR020831">
    <property type="entry name" value="GlycerAld/Erythrose_P_DH"/>
</dbReference>
<dbReference type="InterPro" id="IPR020830">
    <property type="entry name" value="GlycerAld_3-P_DH_AS"/>
</dbReference>
<dbReference type="InterPro" id="IPR020829">
    <property type="entry name" value="GlycerAld_3-P_DH_cat"/>
</dbReference>
<dbReference type="InterPro" id="IPR020828">
    <property type="entry name" value="GlycerAld_3-P_DH_NAD(P)-bd"/>
</dbReference>
<dbReference type="InterPro" id="IPR006424">
    <property type="entry name" value="Glyceraldehyde-3-P_DH_1"/>
</dbReference>
<dbReference type="InterPro" id="IPR036291">
    <property type="entry name" value="NAD(P)-bd_dom_sf"/>
</dbReference>
<dbReference type="NCBIfam" id="TIGR01534">
    <property type="entry name" value="GAPDH-I"/>
    <property type="match status" value="1"/>
</dbReference>
<dbReference type="PANTHER" id="PTHR10836">
    <property type="entry name" value="GLYCERALDEHYDE 3-PHOSPHATE DEHYDROGENASE"/>
    <property type="match status" value="1"/>
</dbReference>
<dbReference type="PANTHER" id="PTHR10836:SF112">
    <property type="entry name" value="GLYCERALDEHYDE-3-PHOSPHATE DEHYDROGENASE GAPC1, CYTOSOLIC-RELATED"/>
    <property type="match status" value="1"/>
</dbReference>
<dbReference type="Pfam" id="PF02800">
    <property type="entry name" value="Gp_dh_C"/>
    <property type="match status" value="1"/>
</dbReference>
<dbReference type="Pfam" id="PF00044">
    <property type="entry name" value="Gp_dh_N"/>
    <property type="match status" value="1"/>
</dbReference>
<dbReference type="PIRSF" id="PIRSF000149">
    <property type="entry name" value="GAP_DH"/>
    <property type="match status" value="1"/>
</dbReference>
<dbReference type="PRINTS" id="PR00078">
    <property type="entry name" value="G3PDHDRGNASE"/>
</dbReference>
<dbReference type="SMART" id="SM00846">
    <property type="entry name" value="Gp_dh_N"/>
    <property type="match status" value="1"/>
</dbReference>
<dbReference type="SUPFAM" id="SSF55347">
    <property type="entry name" value="Glyceraldehyde-3-phosphate dehydrogenase-like, C-terminal domain"/>
    <property type="match status" value="1"/>
</dbReference>
<dbReference type="SUPFAM" id="SSF51735">
    <property type="entry name" value="NAD(P)-binding Rossmann-fold domains"/>
    <property type="match status" value="1"/>
</dbReference>
<dbReference type="PROSITE" id="PS00071">
    <property type="entry name" value="GAPDH"/>
    <property type="match status" value="1"/>
</dbReference>
<accession>P17878</accession>
<proteinExistence type="evidence at transcript level"/>
<feature type="chain" id="PRO_0000145608" description="Glyceraldehyde-3-phosphate dehydrogenase, cytosolic">
    <location>
        <begin position="1"/>
        <end position="337"/>
    </location>
</feature>
<feature type="region of interest" description="Binding to NAD">
    <location>
        <begin position="1"/>
        <end position="151"/>
    </location>
</feature>
<feature type="region of interest" description="Catalytic">
    <location>
        <begin position="152"/>
        <end position="337"/>
    </location>
</feature>
<feature type="active site" description="Nucleophile" evidence="2">
    <location>
        <position position="154"/>
    </location>
</feature>
<feature type="binding site" evidence="1">
    <location>
        <begin position="13"/>
        <end position="14"/>
    </location>
    <ligand>
        <name>NAD(+)</name>
        <dbReference type="ChEBI" id="CHEBI:57540"/>
    </ligand>
</feature>
<feature type="binding site" evidence="1">
    <location>
        <position position="35"/>
    </location>
    <ligand>
        <name>NAD(+)</name>
        <dbReference type="ChEBI" id="CHEBI:57540"/>
    </ligand>
</feature>
<feature type="binding site" evidence="1">
    <location>
        <position position="82"/>
    </location>
    <ligand>
        <name>NAD(+)</name>
        <dbReference type="ChEBI" id="CHEBI:57540"/>
    </ligand>
</feature>
<feature type="binding site" evidence="1">
    <location>
        <begin position="153"/>
        <end position="155"/>
    </location>
    <ligand>
        <name>D-glyceraldehyde 3-phosphate</name>
        <dbReference type="ChEBI" id="CHEBI:59776"/>
    </ligand>
</feature>
<feature type="binding site" evidence="1">
    <location>
        <position position="184"/>
    </location>
    <ligand>
        <name>D-glyceraldehyde 3-phosphate</name>
        <dbReference type="ChEBI" id="CHEBI:59776"/>
    </ligand>
</feature>
<feature type="binding site" evidence="1">
    <location>
        <begin position="213"/>
        <end position="214"/>
    </location>
    <ligand>
        <name>D-glyceraldehyde 3-phosphate</name>
        <dbReference type="ChEBI" id="CHEBI:59776"/>
    </ligand>
</feature>
<feature type="binding site" evidence="1">
    <location>
        <position position="236"/>
    </location>
    <ligand>
        <name>D-glyceraldehyde 3-phosphate</name>
        <dbReference type="ChEBI" id="CHEBI:59776"/>
    </ligand>
</feature>
<feature type="binding site" evidence="1">
    <location>
        <position position="318"/>
    </location>
    <ligand>
        <name>NAD(+)</name>
        <dbReference type="ChEBI" id="CHEBI:57540"/>
    </ligand>
</feature>
<feature type="site" description="Activates thiol group during catalysis" evidence="1">
    <location>
        <position position="181"/>
    </location>
</feature>
<comment type="function">
    <text evidence="1">Key enzyme in glycolysis that catalyzes the first step of the pathway by converting D-glyceraldehyde 3-phosphate (G3P) into 3-phospho-D-glyceroyl phosphate. Essential for the maintenance of cellular ATP levels and carbohydrate metabolism (By similarity).</text>
</comment>
<comment type="catalytic activity">
    <reaction evidence="2">
        <text>D-glyceraldehyde 3-phosphate + phosphate + NAD(+) = (2R)-3-phospho-glyceroyl phosphate + NADH + H(+)</text>
        <dbReference type="Rhea" id="RHEA:10300"/>
        <dbReference type="ChEBI" id="CHEBI:15378"/>
        <dbReference type="ChEBI" id="CHEBI:43474"/>
        <dbReference type="ChEBI" id="CHEBI:57540"/>
        <dbReference type="ChEBI" id="CHEBI:57604"/>
        <dbReference type="ChEBI" id="CHEBI:57945"/>
        <dbReference type="ChEBI" id="CHEBI:59776"/>
        <dbReference type="EC" id="1.2.1.12"/>
    </reaction>
</comment>
<comment type="pathway">
    <text>Carbohydrate degradation; glycolysis; pyruvate from D-glyceraldehyde 3-phosphate: step 1/5.</text>
</comment>
<comment type="subunit">
    <text evidence="1">Homotetramer.</text>
</comment>
<comment type="subcellular location">
    <subcellularLocation>
        <location evidence="1">Cytoplasm</location>
    </subcellularLocation>
</comment>
<comment type="miscellaneous">
    <text>Plants contain two types of GAPDH: cytosolic forms which participate in glycolysis and chloroplast forms which participate in photosynthesis. All the forms are encoded by distinct genes.</text>
</comment>
<comment type="similarity">
    <text evidence="3">Belongs to the glyceraldehyde-3-phosphate dehydrogenase family.</text>
</comment>
<gene>
    <name type="primary">GAPC</name>
</gene>
<sequence>MAKVKVGINGFGRIGRLVARVILQRDDCELVAVNDPFISTDYMTYMFKYDSVHGQCKSHEIKLKDEKTLLFGETPVAVFGCRNPEEIPWGQAGADFVVESTGVFTDKDKAAAHLKGGAKKVVISAPSKDAPMFVVGVNEHEYKSDLNIVSNASCTTNCLAPLAKVINDRFGIVEGLMTTVHAMTATQKTVDGPSMKDWRGGRAASFNIIPSSTGAAKAVGKVLPALNGKLTGMAFRVPTCDVSVVDLTVRIEKAASYEQIKAAIKEESEGKLKGILGYTEDDLVSTDFIGDNRSSIFDAKAGISLNDNFVKLVSWYDNEWGYSTRVVDLIMHISKCQ</sequence>
<name>G3PC_MESCR</name>
<organism>
    <name type="scientific">Mesembryanthemum crystallinum</name>
    <name type="common">Common ice plant</name>
    <name type="synonym">Cryophytum crystallinum</name>
    <dbReference type="NCBI Taxonomy" id="3544"/>
    <lineage>
        <taxon>Eukaryota</taxon>
        <taxon>Viridiplantae</taxon>
        <taxon>Streptophyta</taxon>
        <taxon>Embryophyta</taxon>
        <taxon>Tracheophyta</taxon>
        <taxon>Spermatophyta</taxon>
        <taxon>Magnoliopsida</taxon>
        <taxon>eudicotyledons</taxon>
        <taxon>Gunneridae</taxon>
        <taxon>Pentapetalae</taxon>
        <taxon>Caryophyllales</taxon>
        <taxon>Aizoaceae</taxon>
        <taxon>Mesembryanthemum</taxon>
        <taxon>Mesembryanthemum subgen. Cryophytum</taxon>
    </lineage>
</organism>
<evidence type="ECO:0000250" key="1"/>
<evidence type="ECO:0000255" key="2">
    <source>
        <dbReference type="PROSITE-ProRule" id="PRU10009"/>
    </source>
</evidence>
<evidence type="ECO:0000305" key="3"/>
<keyword id="KW-0963">Cytoplasm</keyword>
<keyword id="KW-0324">Glycolysis</keyword>
<keyword id="KW-0520">NAD</keyword>
<keyword id="KW-0560">Oxidoreductase</keyword>